<name>TYSY_STAAR</name>
<feature type="chain" id="PRO_0000141020" description="Thymidylate synthase">
    <location>
        <begin position="1"/>
        <end position="318"/>
    </location>
</feature>
<feature type="active site" description="Nucleophile" evidence="1">
    <location>
        <position position="201"/>
    </location>
</feature>
<feature type="binding site" description="in other chain" evidence="1">
    <location>
        <position position="26"/>
    </location>
    <ligand>
        <name>dUMP</name>
        <dbReference type="ChEBI" id="CHEBI:246422"/>
        <note>ligand shared between dimeric partners</note>
    </ligand>
</feature>
<feature type="binding site" evidence="1">
    <location>
        <begin position="181"/>
        <end position="182"/>
    </location>
    <ligand>
        <name>dUMP</name>
        <dbReference type="ChEBI" id="CHEBI:246422"/>
        <note>ligand shared between dimeric partners</note>
    </ligand>
</feature>
<feature type="binding site" description="in other chain" evidence="1">
    <location>
        <begin position="221"/>
        <end position="224"/>
    </location>
    <ligand>
        <name>dUMP</name>
        <dbReference type="ChEBI" id="CHEBI:246422"/>
        <note>ligand shared between dimeric partners</note>
    </ligand>
</feature>
<feature type="binding site" evidence="1">
    <location>
        <position position="224"/>
    </location>
    <ligand>
        <name>(6R)-5,10-methylene-5,6,7,8-tetrahydrofolate</name>
        <dbReference type="ChEBI" id="CHEBI:15636"/>
    </ligand>
</feature>
<feature type="binding site" description="in other chain" evidence="1">
    <location>
        <position position="232"/>
    </location>
    <ligand>
        <name>dUMP</name>
        <dbReference type="ChEBI" id="CHEBI:246422"/>
        <note>ligand shared between dimeric partners</note>
    </ligand>
</feature>
<feature type="binding site" description="in other chain" evidence="1">
    <location>
        <begin position="262"/>
        <end position="264"/>
    </location>
    <ligand>
        <name>dUMP</name>
        <dbReference type="ChEBI" id="CHEBI:246422"/>
        <note>ligand shared between dimeric partners</note>
    </ligand>
</feature>
<feature type="binding site" evidence="1">
    <location>
        <position position="317"/>
    </location>
    <ligand>
        <name>(6R)-5,10-methylene-5,6,7,8-tetrahydrofolate</name>
        <dbReference type="ChEBI" id="CHEBI:15636"/>
    </ligand>
</feature>
<keyword id="KW-0963">Cytoplasm</keyword>
<keyword id="KW-0489">Methyltransferase</keyword>
<keyword id="KW-0545">Nucleotide biosynthesis</keyword>
<keyword id="KW-0808">Transferase</keyword>
<gene>
    <name evidence="1" type="primary">thyA</name>
    <name type="synonym">thyE</name>
    <name type="ordered locus">SAR1440</name>
</gene>
<organism>
    <name type="scientific">Staphylococcus aureus (strain MRSA252)</name>
    <dbReference type="NCBI Taxonomy" id="282458"/>
    <lineage>
        <taxon>Bacteria</taxon>
        <taxon>Bacillati</taxon>
        <taxon>Bacillota</taxon>
        <taxon>Bacilli</taxon>
        <taxon>Bacillales</taxon>
        <taxon>Staphylococcaceae</taxon>
        <taxon>Staphylococcus</taxon>
    </lineage>
</organism>
<dbReference type="EC" id="2.1.1.45" evidence="1"/>
<dbReference type="EMBL" id="BX571856">
    <property type="protein sequence ID" value="CAG40437.1"/>
    <property type="molecule type" value="Genomic_DNA"/>
</dbReference>
<dbReference type="RefSeq" id="WP_000934885.1">
    <property type="nucleotide sequence ID" value="NC_002952.2"/>
</dbReference>
<dbReference type="SMR" id="Q6GGY0"/>
<dbReference type="KEGG" id="sar:SAR1440"/>
<dbReference type="HOGENOM" id="CLU_021669_0_2_9"/>
<dbReference type="UniPathway" id="UPA00575"/>
<dbReference type="Proteomes" id="UP000000596">
    <property type="component" value="Chromosome"/>
</dbReference>
<dbReference type="GO" id="GO:0005829">
    <property type="term" value="C:cytosol"/>
    <property type="evidence" value="ECO:0007669"/>
    <property type="project" value="TreeGrafter"/>
</dbReference>
<dbReference type="GO" id="GO:0004799">
    <property type="term" value="F:thymidylate synthase activity"/>
    <property type="evidence" value="ECO:0007669"/>
    <property type="project" value="UniProtKB-UniRule"/>
</dbReference>
<dbReference type="GO" id="GO:0006231">
    <property type="term" value="P:dTMP biosynthetic process"/>
    <property type="evidence" value="ECO:0007669"/>
    <property type="project" value="UniProtKB-UniRule"/>
</dbReference>
<dbReference type="GO" id="GO:0006235">
    <property type="term" value="P:dTTP biosynthetic process"/>
    <property type="evidence" value="ECO:0007669"/>
    <property type="project" value="UniProtKB-UniRule"/>
</dbReference>
<dbReference type="GO" id="GO:0032259">
    <property type="term" value="P:methylation"/>
    <property type="evidence" value="ECO:0007669"/>
    <property type="project" value="UniProtKB-KW"/>
</dbReference>
<dbReference type="CDD" id="cd00351">
    <property type="entry name" value="TS_Pyrimidine_HMase"/>
    <property type="match status" value="1"/>
</dbReference>
<dbReference type="Gene3D" id="3.30.572.10">
    <property type="entry name" value="Thymidylate synthase/dCMP hydroxymethylase domain"/>
    <property type="match status" value="1"/>
</dbReference>
<dbReference type="HAMAP" id="MF_00008">
    <property type="entry name" value="Thymidy_synth_bact"/>
    <property type="match status" value="1"/>
</dbReference>
<dbReference type="InterPro" id="IPR045097">
    <property type="entry name" value="Thymidate_synth/dCMP_Mease"/>
</dbReference>
<dbReference type="InterPro" id="IPR023451">
    <property type="entry name" value="Thymidate_synth/dCMP_Mease_dom"/>
</dbReference>
<dbReference type="InterPro" id="IPR036926">
    <property type="entry name" value="Thymidate_synth/dCMP_Mease_sf"/>
</dbReference>
<dbReference type="InterPro" id="IPR000398">
    <property type="entry name" value="Thymidylate_synthase"/>
</dbReference>
<dbReference type="InterPro" id="IPR020940">
    <property type="entry name" value="Thymidylate_synthase_AS"/>
</dbReference>
<dbReference type="NCBIfam" id="NF002496">
    <property type="entry name" value="PRK01827.1-2"/>
    <property type="match status" value="1"/>
</dbReference>
<dbReference type="NCBIfam" id="TIGR03284">
    <property type="entry name" value="thym_sym"/>
    <property type="match status" value="1"/>
</dbReference>
<dbReference type="PANTHER" id="PTHR11548:SF9">
    <property type="entry name" value="THYMIDYLATE SYNTHASE"/>
    <property type="match status" value="1"/>
</dbReference>
<dbReference type="PANTHER" id="PTHR11548">
    <property type="entry name" value="THYMIDYLATE SYNTHASE 1"/>
    <property type="match status" value="1"/>
</dbReference>
<dbReference type="Pfam" id="PF00303">
    <property type="entry name" value="Thymidylat_synt"/>
    <property type="match status" value="1"/>
</dbReference>
<dbReference type="PRINTS" id="PR00108">
    <property type="entry name" value="THYMDSNTHASE"/>
</dbReference>
<dbReference type="SUPFAM" id="SSF55831">
    <property type="entry name" value="Thymidylate synthase/dCMP hydroxymethylase"/>
    <property type="match status" value="1"/>
</dbReference>
<dbReference type="PROSITE" id="PS00091">
    <property type="entry name" value="THYMIDYLATE_SYNTHASE"/>
    <property type="match status" value="1"/>
</dbReference>
<proteinExistence type="inferred from homology"/>
<reference key="1">
    <citation type="journal article" date="2004" name="Proc. Natl. Acad. Sci. U.S.A.">
        <title>Complete genomes of two clinical Staphylococcus aureus strains: evidence for the rapid evolution of virulence and drug resistance.</title>
        <authorList>
            <person name="Holden M.T.G."/>
            <person name="Feil E.J."/>
            <person name="Lindsay J.A."/>
            <person name="Peacock S.J."/>
            <person name="Day N.P.J."/>
            <person name="Enright M.C."/>
            <person name="Foster T.J."/>
            <person name="Moore C.E."/>
            <person name="Hurst L."/>
            <person name="Atkin R."/>
            <person name="Barron A."/>
            <person name="Bason N."/>
            <person name="Bentley S.D."/>
            <person name="Chillingworth C."/>
            <person name="Chillingworth T."/>
            <person name="Churcher C."/>
            <person name="Clark L."/>
            <person name="Corton C."/>
            <person name="Cronin A."/>
            <person name="Doggett J."/>
            <person name="Dowd L."/>
            <person name="Feltwell T."/>
            <person name="Hance Z."/>
            <person name="Harris B."/>
            <person name="Hauser H."/>
            <person name="Holroyd S."/>
            <person name="Jagels K."/>
            <person name="James K.D."/>
            <person name="Lennard N."/>
            <person name="Line A."/>
            <person name="Mayes R."/>
            <person name="Moule S."/>
            <person name="Mungall K."/>
            <person name="Ormond D."/>
            <person name="Quail M.A."/>
            <person name="Rabbinowitsch E."/>
            <person name="Rutherford K.M."/>
            <person name="Sanders M."/>
            <person name="Sharp S."/>
            <person name="Simmonds M."/>
            <person name="Stevens K."/>
            <person name="Whitehead S."/>
            <person name="Barrell B.G."/>
            <person name="Spratt B.G."/>
            <person name="Parkhill J."/>
        </authorList>
    </citation>
    <scope>NUCLEOTIDE SEQUENCE [LARGE SCALE GENOMIC DNA]</scope>
    <source>
        <strain>MRSA252</strain>
    </source>
</reference>
<comment type="function">
    <text evidence="1">Catalyzes the reductive methylation of 2'-deoxyuridine-5'-monophosphate (dUMP) to 2'-deoxythymidine-5'-monophosphate (dTMP) while utilizing 5,10-methylenetetrahydrofolate (mTHF) as the methyl donor and reductant in the reaction, yielding dihydrofolate (DHF) as a by-product. This enzymatic reaction provides an intracellular de novo source of dTMP, an essential precursor for DNA biosynthesis.</text>
</comment>
<comment type="catalytic activity">
    <reaction evidence="1">
        <text>dUMP + (6R)-5,10-methylene-5,6,7,8-tetrahydrofolate = 7,8-dihydrofolate + dTMP</text>
        <dbReference type="Rhea" id="RHEA:12104"/>
        <dbReference type="ChEBI" id="CHEBI:15636"/>
        <dbReference type="ChEBI" id="CHEBI:57451"/>
        <dbReference type="ChEBI" id="CHEBI:63528"/>
        <dbReference type="ChEBI" id="CHEBI:246422"/>
        <dbReference type="EC" id="2.1.1.45"/>
    </reaction>
</comment>
<comment type="pathway">
    <text evidence="1">Pyrimidine metabolism; dTTP biosynthesis.</text>
</comment>
<comment type="subunit">
    <text evidence="1">Homodimer.</text>
</comment>
<comment type="subcellular location">
    <subcellularLocation>
        <location evidence="1">Cytoplasm</location>
    </subcellularLocation>
</comment>
<comment type="similarity">
    <text evidence="1">Belongs to the thymidylate synthase family. Bacterial-type ThyA subfamily.</text>
</comment>
<evidence type="ECO:0000255" key="1">
    <source>
        <dbReference type="HAMAP-Rule" id="MF_00008"/>
    </source>
</evidence>
<protein>
    <recommendedName>
        <fullName evidence="1">Thymidylate synthase</fullName>
        <shortName evidence="1">TS</shortName>
        <shortName evidence="1">TSase</shortName>
        <ecNumber evidence="1">2.1.1.45</ecNumber>
    </recommendedName>
</protein>
<sequence>MLNSFDAAYHSLCEEVLEIGNTRNDRTNTGTISKFGHQLRFDLSKGFPLLTTKKVSFKLVATELLWFIKGDTNIQYLLKYNNNIWNEWAFENYIKSDEYKGPDMTDFGHRALSDPEFNEQYKEQMKQFKQRILEDDTFAKQFGDLGNVYGKQWRDWVDKDGNHFDQLKTVIEQIKHNPDSRRHIVSAWNPTEIDTMALPPCHTMFQFYVQDGKLSCQLYQRSADIFLGVPFNIASYALLTHLIAKECGLEVGEFVHTFGDAHIYSNHIDAIQTQLARESFNPPTLKINSDKSIFDINYEDLEIVDYESHPAIKAPIAV</sequence>
<accession>Q6GGY0</accession>